<keyword id="KW-1003">Cell membrane</keyword>
<keyword id="KW-0249">Electron transport</keyword>
<keyword id="KW-0349">Heme</keyword>
<keyword id="KW-0408">Iron</keyword>
<keyword id="KW-0472">Membrane</keyword>
<keyword id="KW-0479">Metal-binding</keyword>
<keyword id="KW-0679">Respiratory chain</keyword>
<keyword id="KW-0732">Signal</keyword>
<keyword id="KW-0812">Transmembrane</keyword>
<keyword id="KW-1133">Transmembrane helix</keyword>
<keyword id="KW-0813">Transport</keyword>
<name>CY1_BLAVI</name>
<evidence type="ECO:0000255" key="1"/>
<evidence type="ECO:0000255" key="2">
    <source>
        <dbReference type="PROSITE-ProRule" id="PRU00433"/>
    </source>
</evidence>
<evidence type="ECO:0000305" key="3"/>
<gene>
    <name type="primary">petC</name>
    <name type="synonym">fbcC</name>
</gene>
<comment type="function">
    <text>Component of the ubiquinol-cytochrome c reductase complex (complex III or cytochrome b-c1 complex), which is a respiratory chain that generates an electrochemical potential coupled to ATP synthesis. c1 functions as an electron donor to cytochrome c.</text>
</comment>
<comment type="subunit">
    <text>The main subunits of complex b-c1 are: cytochrome b, cytochrome c1 and the Rieske protein.</text>
</comment>
<comment type="subcellular location">
    <subcellularLocation>
        <location evidence="3">Cell membrane</location>
        <topology evidence="3">Single-pass membrane protein</topology>
    </subcellularLocation>
</comment>
<comment type="PTM">
    <text>Binds 1 heme c group covalently per subunit.</text>
</comment>
<sequence>MTIKLRFVASLALVFGLAAASVPAQASGGDTPHLQSWSFAGPFGQYDKAQLRRGFQVFQNVCVSCHTLENGGFRNLPSRAAPNWPLDEVRQLAASWPVQVKDINDKGDPMQRAPKLPDRIPSQYANEAAARIIHNGAVPPDLSVIAKARTFQRGFPWWVTDIFTQYNENGVDYIVALLNGYEDPPERFKVPDGSFYNKYFPGHIIGMTPPIADGLVTYGDGTPETQLQYSKDVAAFLMWAAEPTLDVRKRIGWWVLGFLVIFTGLLVATKIVVWRPVKKGLA</sequence>
<reference key="1">
    <citation type="journal article" date="1989" name="Mol. Gen. Genet.">
        <title>Cloning and sequencing of the fbcF, B and C genes encoding the cytochrome b/c1 complex from Rhodopseudomonas viridis.</title>
        <authorList>
            <person name="Verbist J."/>
            <person name="Lang F."/>
            <person name="Gabellini N."/>
            <person name="Oesterhelt D."/>
        </authorList>
    </citation>
    <scope>NUCLEOTIDE SEQUENCE [GENOMIC DNA]</scope>
    <source>
        <strain>ATCC 19567 / DSM 133 / F</strain>
    </source>
</reference>
<feature type="signal peptide" evidence="1">
    <location>
        <begin position="1"/>
        <end position="24"/>
    </location>
</feature>
<feature type="chain" id="PRO_0000006564" description="Cytochrome c1">
    <location>
        <begin position="25"/>
        <end position="282"/>
    </location>
</feature>
<feature type="transmembrane region" description="Helical; Note=Anchors to the membrane" evidence="1">
    <location>
        <begin position="253"/>
        <end position="273"/>
    </location>
</feature>
<feature type="binding site" description="covalent" evidence="2">
    <location>
        <position position="62"/>
    </location>
    <ligand>
        <name>heme c</name>
        <dbReference type="ChEBI" id="CHEBI:61717"/>
    </ligand>
</feature>
<feature type="binding site" description="covalent" evidence="2">
    <location>
        <position position="65"/>
    </location>
    <ligand>
        <name>heme c</name>
        <dbReference type="ChEBI" id="CHEBI:61717"/>
    </ligand>
</feature>
<feature type="binding site" description="axial binding residue" evidence="2">
    <location>
        <position position="66"/>
    </location>
    <ligand>
        <name>heme c</name>
        <dbReference type="ChEBI" id="CHEBI:61717"/>
    </ligand>
    <ligandPart>
        <name>Fe</name>
        <dbReference type="ChEBI" id="CHEBI:18248"/>
    </ligandPart>
</feature>
<feature type="binding site" description="axial binding residue" evidence="2">
    <location>
        <position position="207"/>
    </location>
    <ligand>
        <name>heme c</name>
        <dbReference type="ChEBI" id="CHEBI:61717"/>
    </ligand>
    <ligandPart>
        <name>Fe</name>
        <dbReference type="ChEBI" id="CHEBI:18248"/>
    </ligandPart>
</feature>
<proteinExistence type="inferred from homology"/>
<protein>
    <recommendedName>
        <fullName>Cytochrome c1</fullName>
    </recommendedName>
</protein>
<dbReference type="PIR" id="JQ0347">
    <property type="entry name" value="JQ0347"/>
</dbReference>
<dbReference type="SMR" id="P81379"/>
<dbReference type="STRING" id="1079.BVIR_2483"/>
<dbReference type="GO" id="GO:0005886">
    <property type="term" value="C:plasma membrane"/>
    <property type="evidence" value="ECO:0007669"/>
    <property type="project" value="UniProtKB-SubCell"/>
</dbReference>
<dbReference type="GO" id="GO:0009055">
    <property type="term" value="F:electron transfer activity"/>
    <property type="evidence" value="ECO:0007669"/>
    <property type="project" value="InterPro"/>
</dbReference>
<dbReference type="GO" id="GO:0020037">
    <property type="term" value="F:heme binding"/>
    <property type="evidence" value="ECO:0007669"/>
    <property type="project" value="InterPro"/>
</dbReference>
<dbReference type="GO" id="GO:0046872">
    <property type="term" value="F:metal ion binding"/>
    <property type="evidence" value="ECO:0007669"/>
    <property type="project" value="UniProtKB-KW"/>
</dbReference>
<dbReference type="Gene3D" id="1.10.760.10">
    <property type="entry name" value="Cytochrome c-like domain"/>
    <property type="match status" value="1"/>
</dbReference>
<dbReference type="Gene3D" id="1.20.5.100">
    <property type="entry name" value="Cytochrome c1, transmembrane anchor, C-terminal"/>
    <property type="match status" value="1"/>
</dbReference>
<dbReference type="InterPro" id="IPR009056">
    <property type="entry name" value="Cyt_c-like_dom"/>
</dbReference>
<dbReference type="InterPro" id="IPR036909">
    <property type="entry name" value="Cyt_c-like_dom_sf"/>
</dbReference>
<dbReference type="InterPro" id="IPR002326">
    <property type="entry name" value="Cyt_c1"/>
</dbReference>
<dbReference type="PANTHER" id="PTHR10266">
    <property type="entry name" value="CYTOCHROME C1"/>
    <property type="match status" value="1"/>
</dbReference>
<dbReference type="PANTHER" id="PTHR10266:SF3">
    <property type="entry name" value="CYTOCHROME C1, HEME PROTEIN, MITOCHONDRIAL"/>
    <property type="match status" value="1"/>
</dbReference>
<dbReference type="Pfam" id="PF02167">
    <property type="entry name" value="Cytochrom_C1"/>
    <property type="match status" value="1"/>
</dbReference>
<dbReference type="PRINTS" id="PR00603">
    <property type="entry name" value="CYTOCHROMEC1"/>
</dbReference>
<dbReference type="SUPFAM" id="SSF46626">
    <property type="entry name" value="Cytochrome c"/>
    <property type="match status" value="1"/>
</dbReference>
<dbReference type="PROSITE" id="PS51007">
    <property type="entry name" value="CYTC"/>
    <property type="match status" value="1"/>
</dbReference>
<organism>
    <name type="scientific">Blastochloris viridis</name>
    <name type="common">Rhodopseudomonas viridis</name>
    <dbReference type="NCBI Taxonomy" id="1079"/>
    <lineage>
        <taxon>Bacteria</taxon>
        <taxon>Pseudomonadati</taxon>
        <taxon>Pseudomonadota</taxon>
        <taxon>Alphaproteobacteria</taxon>
        <taxon>Hyphomicrobiales</taxon>
        <taxon>Blastochloridaceae</taxon>
        <taxon>Blastochloris</taxon>
    </lineage>
</organism>
<accession>P81379</accession>